<proteinExistence type="inferred from homology"/>
<gene>
    <name evidence="1" type="primary">pyrI</name>
    <name type="ordered locus">ASA_0227</name>
</gene>
<accession>A4SHP7</accession>
<reference key="1">
    <citation type="journal article" date="2008" name="BMC Genomics">
        <title>The genome of Aeromonas salmonicida subsp. salmonicida A449: insights into the evolution of a fish pathogen.</title>
        <authorList>
            <person name="Reith M.E."/>
            <person name="Singh R.K."/>
            <person name="Curtis B."/>
            <person name="Boyd J.M."/>
            <person name="Bouevitch A."/>
            <person name="Kimball J."/>
            <person name="Munholland J."/>
            <person name="Murphy C."/>
            <person name="Sarty D."/>
            <person name="Williams J."/>
            <person name="Nash J.H."/>
            <person name="Johnson S.C."/>
            <person name="Brown L.L."/>
        </authorList>
    </citation>
    <scope>NUCLEOTIDE SEQUENCE [LARGE SCALE GENOMIC DNA]</scope>
    <source>
        <strain>A449</strain>
    </source>
</reference>
<organism>
    <name type="scientific">Aeromonas salmonicida (strain A449)</name>
    <dbReference type="NCBI Taxonomy" id="382245"/>
    <lineage>
        <taxon>Bacteria</taxon>
        <taxon>Pseudomonadati</taxon>
        <taxon>Pseudomonadota</taxon>
        <taxon>Gammaproteobacteria</taxon>
        <taxon>Aeromonadales</taxon>
        <taxon>Aeromonadaceae</taxon>
        <taxon>Aeromonas</taxon>
    </lineage>
</organism>
<sequence length="154" mass="17456">MSEKNQLQVEAIRHGSVIDHVPAGQGIKILKLFQLIETQERITVGFNLKSGALGKKDLIKIENTRLTAEQANQLALFAPKATVNIIEDFAVVKKHQLELPEFITGVFHCPNSNCISHNEPVDSYFRVREVKGVVRMKCKYCEKSFTQDIVSERY</sequence>
<evidence type="ECO:0000255" key="1">
    <source>
        <dbReference type="HAMAP-Rule" id="MF_00002"/>
    </source>
</evidence>
<keyword id="KW-0479">Metal-binding</keyword>
<keyword id="KW-0665">Pyrimidine biosynthesis</keyword>
<keyword id="KW-0862">Zinc</keyword>
<name>PYRI_AERS4</name>
<protein>
    <recommendedName>
        <fullName evidence="1">Aspartate carbamoyltransferase regulatory chain</fullName>
    </recommendedName>
</protein>
<dbReference type="EMBL" id="CP000644">
    <property type="protein sequence ID" value="ABO88419.1"/>
    <property type="molecule type" value="Genomic_DNA"/>
</dbReference>
<dbReference type="RefSeq" id="WP_005318436.1">
    <property type="nucleotide sequence ID" value="NC_009348.1"/>
</dbReference>
<dbReference type="SMR" id="A4SHP7"/>
<dbReference type="STRING" id="29491.GCA_000820065_01301"/>
<dbReference type="GeneID" id="92725413"/>
<dbReference type="KEGG" id="asa:ASA_0227"/>
<dbReference type="eggNOG" id="COG1781">
    <property type="taxonomic scope" value="Bacteria"/>
</dbReference>
<dbReference type="HOGENOM" id="CLU_128576_0_0_6"/>
<dbReference type="Proteomes" id="UP000000225">
    <property type="component" value="Chromosome"/>
</dbReference>
<dbReference type="GO" id="GO:0009347">
    <property type="term" value="C:aspartate carbamoyltransferase complex"/>
    <property type="evidence" value="ECO:0007669"/>
    <property type="project" value="InterPro"/>
</dbReference>
<dbReference type="GO" id="GO:0046872">
    <property type="term" value="F:metal ion binding"/>
    <property type="evidence" value="ECO:0007669"/>
    <property type="project" value="UniProtKB-KW"/>
</dbReference>
<dbReference type="GO" id="GO:0006207">
    <property type="term" value="P:'de novo' pyrimidine nucleobase biosynthetic process"/>
    <property type="evidence" value="ECO:0007669"/>
    <property type="project" value="InterPro"/>
</dbReference>
<dbReference type="GO" id="GO:0006221">
    <property type="term" value="P:pyrimidine nucleotide biosynthetic process"/>
    <property type="evidence" value="ECO:0007669"/>
    <property type="project" value="UniProtKB-UniRule"/>
</dbReference>
<dbReference type="Gene3D" id="2.30.30.20">
    <property type="entry name" value="Aspartate carbamoyltransferase regulatory subunit, C-terminal domain"/>
    <property type="match status" value="1"/>
</dbReference>
<dbReference type="Gene3D" id="3.30.70.140">
    <property type="entry name" value="Aspartate carbamoyltransferase regulatory subunit, N-terminal domain"/>
    <property type="match status" value="1"/>
</dbReference>
<dbReference type="HAMAP" id="MF_00002">
    <property type="entry name" value="Asp_carb_tr_reg"/>
    <property type="match status" value="1"/>
</dbReference>
<dbReference type="InterPro" id="IPR020545">
    <property type="entry name" value="Asp_carbamoyltransf_reg_N"/>
</dbReference>
<dbReference type="InterPro" id="IPR002801">
    <property type="entry name" value="Asp_carbamoylTrfase_reg"/>
</dbReference>
<dbReference type="InterPro" id="IPR020542">
    <property type="entry name" value="Asp_carbamoyltrfase_reg_C"/>
</dbReference>
<dbReference type="InterPro" id="IPR036792">
    <property type="entry name" value="Asp_carbatrfase_reg_C_sf"/>
</dbReference>
<dbReference type="InterPro" id="IPR036793">
    <property type="entry name" value="Asp_carbatrfase_reg_N_sf"/>
</dbReference>
<dbReference type="NCBIfam" id="TIGR00240">
    <property type="entry name" value="ATCase_reg"/>
    <property type="match status" value="1"/>
</dbReference>
<dbReference type="PANTHER" id="PTHR35805">
    <property type="entry name" value="ASPARTATE CARBAMOYLTRANSFERASE REGULATORY CHAIN"/>
    <property type="match status" value="1"/>
</dbReference>
<dbReference type="PANTHER" id="PTHR35805:SF1">
    <property type="entry name" value="ASPARTATE CARBAMOYLTRANSFERASE REGULATORY CHAIN"/>
    <property type="match status" value="1"/>
</dbReference>
<dbReference type="Pfam" id="PF01948">
    <property type="entry name" value="PyrI"/>
    <property type="match status" value="1"/>
</dbReference>
<dbReference type="Pfam" id="PF02748">
    <property type="entry name" value="PyrI_C"/>
    <property type="match status" value="1"/>
</dbReference>
<dbReference type="SUPFAM" id="SSF57825">
    <property type="entry name" value="Aspartate carbamoyltransferase, Regulatory-chain, C-terminal domain"/>
    <property type="match status" value="1"/>
</dbReference>
<dbReference type="SUPFAM" id="SSF54893">
    <property type="entry name" value="Aspartate carbamoyltransferase, Regulatory-chain, N-terminal domain"/>
    <property type="match status" value="1"/>
</dbReference>
<comment type="function">
    <text evidence="1">Involved in allosteric regulation of aspartate carbamoyltransferase.</text>
</comment>
<comment type="cofactor">
    <cofactor evidence="1">
        <name>Zn(2+)</name>
        <dbReference type="ChEBI" id="CHEBI:29105"/>
    </cofactor>
    <text evidence="1">Binds 1 zinc ion per subunit.</text>
</comment>
<comment type="subunit">
    <text evidence="1">Contains catalytic and regulatory chains.</text>
</comment>
<comment type="similarity">
    <text evidence="1">Belongs to the PyrI family.</text>
</comment>
<feature type="chain" id="PRO_1000000025" description="Aspartate carbamoyltransferase regulatory chain">
    <location>
        <begin position="1"/>
        <end position="154"/>
    </location>
</feature>
<feature type="binding site" evidence="1">
    <location>
        <position position="109"/>
    </location>
    <ligand>
        <name>Zn(2+)</name>
        <dbReference type="ChEBI" id="CHEBI:29105"/>
    </ligand>
</feature>
<feature type="binding site" evidence="1">
    <location>
        <position position="114"/>
    </location>
    <ligand>
        <name>Zn(2+)</name>
        <dbReference type="ChEBI" id="CHEBI:29105"/>
    </ligand>
</feature>
<feature type="binding site" evidence="1">
    <location>
        <position position="138"/>
    </location>
    <ligand>
        <name>Zn(2+)</name>
        <dbReference type="ChEBI" id="CHEBI:29105"/>
    </ligand>
</feature>
<feature type="binding site" evidence="1">
    <location>
        <position position="141"/>
    </location>
    <ligand>
        <name>Zn(2+)</name>
        <dbReference type="ChEBI" id="CHEBI:29105"/>
    </ligand>
</feature>